<evidence type="ECO:0000255" key="1">
    <source>
        <dbReference type="HAMAP-Rule" id="MF_01152"/>
    </source>
</evidence>
<evidence type="ECO:0000256" key="2">
    <source>
        <dbReference type="SAM" id="MobiDB-lite"/>
    </source>
</evidence>
<protein>
    <recommendedName>
        <fullName evidence="1">Chaperone protein DnaJ 1</fullName>
    </recommendedName>
</protein>
<organism>
    <name type="scientific">Cutibacterium acnes (strain DSM 16379 / KPA171202)</name>
    <name type="common">Propionibacterium acnes</name>
    <dbReference type="NCBI Taxonomy" id="267747"/>
    <lineage>
        <taxon>Bacteria</taxon>
        <taxon>Bacillati</taxon>
        <taxon>Actinomycetota</taxon>
        <taxon>Actinomycetes</taxon>
        <taxon>Propionibacteriales</taxon>
        <taxon>Propionibacteriaceae</taxon>
        <taxon>Cutibacterium</taxon>
    </lineage>
</organism>
<reference key="1">
    <citation type="journal article" date="2004" name="Science">
        <title>The complete genome sequence of Propionibacterium acnes, a commensal of human skin.</title>
        <authorList>
            <person name="Brueggemann H."/>
            <person name="Henne A."/>
            <person name="Hoster F."/>
            <person name="Liesegang H."/>
            <person name="Wiezer A."/>
            <person name="Strittmatter A."/>
            <person name="Hujer S."/>
            <person name="Duerre P."/>
            <person name="Gottschalk G."/>
        </authorList>
    </citation>
    <scope>NUCLEOTIDE SEQUENCE [LARGE SCALE GENOMIC DNA]</scope>
    <source>
        <strain>DSM 16379 / KPA171202</strain>
    </source>
</reference>
<dbReference type="EMBL" id="AE017283">
    <property type="protein sequence ID" value="AAT82669.1"/>
    <property type="molecule type" value="Genomic_DNA"/>
</dbReference>
<dbReference type="SMR" id="Q6A997"/>
<dbReference type="EnsemblBacteria" id="AAT82669">
    <property type="protein sequence ID" value="AAT82669"/>
    <property type="gene ID" value="PPA0916"/>
</dbReference>
<dbReference type="KEGG" id="pac:PPA0916"/>
<dbReference type="eggNOG" id="COG0484">
    <property type="taxonomic scope" value="Bacteria"/>
</dbReference>
<dbReference type="HOGENOM" id="CLU_017633_0_7_11"/>
<dbReference type="Proteomes" id="UP000000603">
    <property type="component" value="Chromosome"/>
</dbReference>
<dbReference type="GO" id="GO:0005737">
    <property type="term" value="C:cytoplasm"/>
    <property type="evidence" value="ECO:0007669"/>
    <property type="project" value="UniProtKB-SubCell"/>
</dbReference>
<dbReference type="GO" id="GO:0005524">
    <property type="term" value="F:ATP binding"/>
    <property type="evidence" value="ECO:0007669"/>
    <property type="project" value="InterPro"/>
</dbReference>
<dbReference type="GO" id="GO:0031072">
    <property type="term" value="F:heat shock protein binding"/>
    <property type="evidence" value="ECO:0007669"/>
    <property type="project" value="InterPro"/>
</dbReference>
<dbReference type="GO" id="GO:0051082">
    <property type="term" value="F:unfolded protein binding"/>
    <property type="evidence" value="ECO:0007669"/>
    <property type="project" value="UniProtKB-UniRule"/>
</dbReference>
<dbReference type="GO" id="GO:0008270">
    <property type="term" value="F:zinc ion binding"/>
    <property type="evidence" value="ECO:0007669"/>
    <property type="project" value="UniProtKB-UniRule"/>
</dbReference>
<dbReference type="GO" id="GO:0051085">
    <property type="term" value="P:chaperone cofactor-dependent protein refolding"/>
    <property type="evidence" value="ECO:0007669"/>
    <property type="project" value="TreeGrafter"/>
</dbReference>
<dbReference type="GO" id="GO:0006260">
    <property type="term" value="P:DNA replication"/>
    <property type="evidence" value="ECO:0007669"/>
    <property type="project" value="UniProtKB-KW"/>
</dbReference>
<dbReference type="GO" id="GO:0042026">
    <property type="term" value="P:protein refolding"/>
    <property type="evidence" value="ECO:0007669"/>
    <property type="project" value="TreeGrafter"/>
</dbReference>
<dbReference type="GO" id="GO:0009408">
    <property type="term" value="P:response to heat"/>
    <property type="evidence" value="ECO:0007669"/>
    <property type="project" value="InterPro"/>
</dbReference>
<dbReference type="CDD" id="cd06257">
    <property type="entry name" value="DnaJ"/>
    <property type="match status" value="1"/>
</dbReference>
<dbReference type="CDD" id="cd10747">
    <property type="entry name" value="DnaJ_C"/>
    <property type="match status" value="1"/>
</dbReference>
<dbReference type="CDD" id="cd10719">
    <property type="entry name" value="DnaJ_zf"/>
    <property type="match status" value="1"/>
</dbReference>
<dbReference type="FunFam" id="2.60.260.20:FF:000013">
    <property type="entry name" value="DnaJ subfamily B member 11"/>
    <property type="match status" value="1"/>
</dbReference>
<dbReference type="Gene3D" id="6.20.20.10">
    <property type="match status" value="2"/>
</dbReference>
<dbReference type="Gene3D" id="1.10.287.110">
    <property type="entry name" value="DnaJ domain"/>
    <property type="match status" value="1"/>
</dbReference>
<dbReference type="Gene3D" id="2.60.260.20">
    <property type="entry name" value="Urease metallochaperone UreE, N-terminal domain"/>
    <property type="match status" value="2"/>
</dbReference>
<dbReference type="HAMAP" id="MF_01152">
    <property type="entry name" value="DnaJ"/>
    <property type="match status" value="1"/>
</dbReference>
<dbReference type="InterPro" id="IPR012724">
    <property type="entry name" value="DnaJ"/>
</dbReference>
<dbReference type="InterPro" id="IPR002939">
    <property type="entry name" value="DnaJ_C"/>
</dbReference>
<dbReference type="InterPro" id="IPR001623">
    <property type="entry name" value="DnaJ_domain"/>
</dbReference>
<dbReference type="InterPro" id="IPR018253">
    <property type="entry name" value="DnaJ_domain_CS"/>
</dbReference>
<dbReference type="InterPro" id="IPR008971">
    <property type="entry name" value="HSP40/DnaJ_pept-bd"/>
</dbReference>
<dbReference type="InterPro" id="IPR001305">
    <property type="entry name" value="HSP_DnaJ_Cys-rich_dom"/>
</dbReference>
<dbReference type="InterPro" id="IPR036410">
    <property type="entry name" value="HSP_DnaJ_Cys-rich_dom_sf"/>
</dbReference>
<dbReference type="InterPro" id="IPR036869">
    <property type="entry name" value="J_dom_sf"/>
</dbReference>
<dbReference type="NCBIfam" id="NF008035">
    <property type="entry name" value="PRK10767.1"/>
    <property type="match status" value="1"/>
</dbReference>
<dbReference type="PANTHER" id="PTHR43096:SF48">
    <property type="entry name" value="CHAPERONE PROTEIN DNAJ"/>
    <property type="match status" value="1"/>
</dbReference>
<dbReference type="PANTHER" id="PTHR43096">
    <property type="entry name" value="DNAJ HOMOLOG 1, MITOCHONDRIAL-RELATED"/>
    <property type="match status" value="1"/>
</dbReference>
<dbReference type="Pfam" id="PF00226">
    <property type="entry name" value="DnaJ"/>
    <property type="match status" value="1"/>
</dbReference>
<dbReference type="Pfam" id="PF01556">
    <property type="entry name" value="DnaJ_C"/>
    <property type="match status" value="1"/>
</dbReference>
<dbReference type="Pfam" id="PF00684">
    <property type="entry name" value="DnaJ_CXXCXGXG"/>
    <property type="match status" value="1"/>
</dbReference>
<dbReference type="PRINTS" id="PR00625">
    <property type="entry name" value="JDOMAIN"/>
</dbReference>
<dbReference type="SMART" id="SM00271">
    <property type="entry name" value="DnaJ"/>
    <property type="match status" value="1"/>
</dbReference>
<dbReference type="SUPFAM" id="SSF46565">
    <property type="entry name" value="Chaperone J-domain"/>
    <property type="match status" value="1"/>
</dbReference>
<dbReference type="SUPFAM" id="SSF57938">
    <property type="entry name" value="DnaJ/Hsp40 cysteine-rich domain"/>
    <property type="match status" value="1"/>
</dbReference>
<dbReference type="SUPFAM" id="SSF49493">
    <property type="entry name" value="HSP40/DnaJ peptide-binding domain"/>
    <property type="match status" value="2"/>
</dbReference>
<dbReference type="PROSITE" id="PS00636">
    <property type="entry name" value="DNAJ_1"/>
    <property type="match status" value="1"/>
</dbReference>
<dbReference type="PROSITE" id="PS50076">
    <property type="entry name" value="DNAJ_2"/>
    <property type="match status" value="1"/>
</dbReference>
<dbReference type="PROSITE" id="PS51188">
    <property type="entry name" value="ZF_CR"/>
    <property type="match status" value="1"/>
</dbReference>
<gene>
    <name evidence="1" type="primary">dnaJ1</name>
    <name type="ordered locus">PPA0916</name>
</gene>
<name>DNAJ1_CUTAK</name>
<accession>Q6A997</accession>
<proteinExistence type="inferred from homology"/>
<feature type="chain" id="PRO_0000070853" description="Chaperone protein DnaJ 1">
    <location>
        <begin position="1"/>
        <end position="392"/>
    </location>
</feature>
<feature type="domain" description="J" evidence="1">
    <location>
        <begin position="4"/>
        <end position="67"/>
    </location>
</feature>
<feature type="repeat" description="CXXCXGXG motif">
    <location>
        <begin position="147"/>
        <end position="154"/>
    </location>
</feature>
<feature type="repeat" description="CXXCXGXG motif">
    <location>
        <begin position="164"/>
        <end position="171"/>
    </location>
</feature>
<feature type="repeat" description="CXXCXGXG motif">
    <location>
        <begin position="190"/>
        <end position="197"/>
    </location>
</feature>
<feature type="repeat" description="CXXCXGXG motif">
    <location>
        <begin position="204"/>
        <end position="211"/>
    </location>
</feature>
<feature type="zinc finger region" description="CR-type" evidence="1">
    <location>
        <begin position="134"/>
        <end position="216"/>
    </location>
</feature>
<feature type="region of interest" description="Disordered" evidence="2">
    <location>
        <begin position="367"/>
        <end position="392"/>
    </location>
</feature>
<feature type="binding site" evidence="1">
    <location>
        <position position="147"/>
    </location>
    <ligand>
        <name>Zn(2+)</name>
        <dbReference type="ChEBI" id="CHEBI:29105"/>
        <label>1</label>
    </ligand>
</feature>
<feature type="binding site" evidence="1">
    <location>
        <position position="150"/>
    </location>
    <ligand>
        <name>Zn(2+)</name>
        <dbReference type="ChEBI" id="CHEBI:29105"/>
        <label>1</label>
    </ligand>
</feature>
<feature type="binding site" evidence="1">
    <location>
        <position position="164"/>
    </location>
    <ligand>
        <name>Zn(2+)</name>
        <dbReference type="ChEBI" id="CHEBI:29105"/>
        <label>2</label>
    </ligand>
</feature>
<feature type="binding site" evidence="1">
    <location>
        <position position="167"/>
    </location>
    <ligand>
        <name>Zn(2+)</name>
        <dbReference type="ChEBI" id="CHEBI:29105"/>
        <label>2</label>
    </ligand>
</feature>
<feature type="binding site" evidence="1">
    <location>
        <position position="190"/>
    </location>
    <ligand>
        <name>Zn(2+)</name>
        <dbReference type="ChEBI" id="CHEBI:29105"/>
        <label>2</label>
    </ligand>
</feature>
<feature type="binding site" evidence="1">
    <location>
        <position position="193"/>
    </location>
    <ligand>
        <name>Zn(2+)</name>
        <dbReference type="ChEBI" id="CHEBI:29105"/>
        <label>2</label>
    </ligand>
</feature>
<feature type="binding site" evidence="1">
    <location>
        <position position="204"/>
    </location>
    <ligand>
        <name>Zn(2+)</name>
        <dbReference type="ChEBI" id="CHEBI:29105"/>
        <label>1</label>
    </ligand>
</feature>
<feature type="binding site" evidence="1">
    <location>
        <position position="207"/>
    </location>
    <ligand>
        <name>Zn(2+)</name>
        <dbReference type="ChEBI" id="CHEBI:29105"/>
        <label>1</label>
    </ligand>
</feature>
<sequence length="392" mass="41911">MSNDYYEILGVSHDASADEIKKAYRRKAMKLHPDVAGPGSEEEFKKVQEAYEILQDPQKRAVFDRGGDPNARMGGFGEGGFSSAGFDFTNLVDAMFGGSSPFGSGGGRGPRSRTRRGQDALVRMRLSLAEAVFGVTKSLEVDTAVVCPKCQGKGAQSGSEPVTCDTCQGRGEVITVQRSFLGDIRTSQPCPTCHGYGTVIPDPCQECSGEGRVRTTRTINVKIPAGVADGNRIHLDSRGEVGPGGGPAGDLYIEMTVSPHDVFTRHGDDLEMVVTIPMTAAALGTKVPMHTLEADREDFAEDTKTVTVEVPAGTQSGTRIVVSERGVPRLRRNGRGDLGVTFIVQTPTKLDSHQKDLLRQLAEAREETNASASVEKSGGRGMFSRIKEAFGG</sequence>
<keyword id="KW-0143">Chaperone</keyword>
<keyword id="KW-0963">Cytoplasm</keyword>
<keyword id="KW-0235">DNA replication</keyword>
<keyword id="KW-0479">Metal-binding</keyword>
<keyword id="KW-0677">Repeat</keyword>
<keyword id="KW-0346">Stress response</keyword>
<keyword id="KW-0862">Zinc</keyword>
<keyword id="KW-0863">Zinc-finger</keyword>
<comment type="function">
    <text evidence="1">Participates actively in the response to hyperosmotic and heat shock by preventing the aggregation of stress-denatured proteins and by disaggregating proteins, also in an autonomous, DnaK-independent fashion. Unfolded proteins bind initially to DnaJ; upon interaction with the DnaJ-bound protein, DnaK hydrolyzes its bound ATP, resulting in the formation of a stable complex. GrpE releases ADP from DnaK; ATP binding to DnaK triggers the release of the substrate protein, thus completing the reaction cycle. Several rounds of ATP-dependent interactions between DnaJ, DnaK and GrpE are required for fully efficient folding. Also involved, together with DnaK and GrpE, in the DNA replication of plasmids through activation of initiation proteins.</text>
</comment>
<comment type="cofactor">
    <cofactor evidence="1">
        <name>Zn(2+)</name>
        <dbReference type="ChEBI" id="CHEBI:29105"/>
    </cofactor>
    <text evidence="1">Binds 2 Zn(2+) ions per monomer.</text>
</comment>
<comment type="subunit">
    <text evidence="1">Homodimer.</text>
</comment>
<comment type="subcellular location">
    <subcellularLocation>
        <location evidence="1">Cytoplasm</location>
    </subcellularLocation>
</comment>
<comment type="domain">
    <text evidence="1">The J domain is necessary and sufficient to stimulate DnaK ATPase activity. Zinc center 1 plays an important role in the autonomous, DnaK-independent chaperone activity of DnaJ. Zinc center 2 is essential for interaction with DnaK and for DnaJ activity.</text>
</comment>
<comment type="similarity">
    <text evidence="1">Belongs to the DnaJ family.</text>
</comment>